<sequence>MKTFTAKPETVKRDWYVVDATGKTLGRLATELARRLRGKHKAEYTPHVDTGDYIIVLNADKVAVTGNKRTDKVYYHHTGHIGGIKQATFEEMIARRPERVIEIAVKGMLPKGPLGRAMFRKLKVYAGNEHNHAAQQPQVLDI</sequence>
<comment type="function">
    <text evidence="1">This protein is one of the early assembly proteins of the 50S ribosomal subunit, although it is not seen to bind rRNA by itself. It is important during the early stages of 50S assembly.</text>
</comment>
<comment type="subunit">
    <text evidence="1">Part of the 50S ribosomal subunit.</text>
</comment>
<comment type="similarity">
    <text evidence="1">Belongs to the universal ribosomal protein uL13 family.</text>
</comment>
<protein>
    <recommendedName>
        <fullName evidence="1">Large ribosomal subunit protein uL13</fullName>
    </recommendedName>
    <alternativeName>
        <fullName evidence="2">50S ribosomal protein L13</fullName>
    </alternativeName>
</protein>
<gene>
    <name evidence="1" type="primary">rplM</name>
    <name type="ordered locus">ECIAI39_3721</name>
</gene>
<feature type="chain" id="PRO_1000144122" description="Large ribosomal subunit protein uL13">
    <location>
        <begin position="1"/>
        <end position="142"/>
    </location>
</feature>
<evidence type="ECO:0000255" key="1">
    <source>
        <dbReference type="HAMAP-Rule" id="MF_01366"/>
    </source>
</evidence>
<evidence type="ECO:0000305" key="2"/>
<name>RL13_ECO7I</name>
<keyword id="KW-0687">Ribonucleoprotein</keyword>
<keyword id="KW-0689">Ribosomal protein</keyword>
<accession>B7NKU3</accession>
<reference key="1">
    <citation type="journal article" date="2009" name="PLoS Genet.">
        <title>Organised genome dynamics in the Escherichia coli species results in highly diverse adaptive paths.</title>
        <authorList>
            <person name="Touchon M."/>
            <person name="Hoede C."/>
            <person name="Tenaillon O."/>
            <person name="Barbe V."/>
            <person name="Baeriswyl S."/>
            <person name="Bidet P."/>
            <person name="Bingen E."/>
            <person name="Bonacorsi S."/>
            <person name="Bouchier C."/>
            <person name="Bouvet O."/>
            <person name="Calteau A."/>
            <person name="Chiapello H."/>
            <person name="Clermont O."/>
            <person name="Cruveiller S."/>
            <person name="Danchin A."/>
            <person name="Diard M."/>
            <person name="Dossat C."/>
            <person name="Karoui M.E."/>
            <person name="Frapy E."/>
            <person name="Garry L."/>
            <person name="Ghigo J.M."/>
            <person name="Gilles A.M."/>
            <person name="Johnson J."/>
            <person name="Le Bouguenec C."/>
            <person name="Lescat M."/>
            <person name="Mangenot S."/>
            <person name="Martinez-Jehanne V."/>
            <person name="Matic I."/>
            <person name="Nassif X."/>
            <person name="Oztas S."/>
            <person name="Petit M.A."/>
            <person name="Pichon C."/>
            <person name="Rouy Z."/>
            <person name="Ruf C.S."/>
            <person name="Schneider D."/>
            <person name="Tourret J."/>
            <person name="Vacherie B."/>
            <person name="Vallenet D."/>
            <person name="Medigue C."/>
            <person name="Rocha E.P.C."/>
            <person name="Denamur E."/>
        </authorList>
    </citation>
    <scope>NUCLEOTIDE SEQUENCE [LARGE SCALE GENOMIC DNA]</scope>
    <source>
        <strain>IAI39 / ExPEC</strain>
    </source>
</reference>
<dbReference type="EMBL" id="CU928164">
    <property type="protein sequence ID" value="CAR19837.1"/>
    <property type="molecule type" value="Genomic_DNA"/>
</dbReference>
<dbReference type="RefSeq" id="WP_000847559.1">
    <property type="nucleotide sequence ID" value="NC_011750.1"/>
</dbReference>
<dbReference type="RefSeq" id="YP_002409624.1">
    <property type="nucleotide sequence ID" value="NC_011750.1"/>
</dbReference>
<dbReference type="SMR" id="B7NKU3"/>
<dbReference type="STRING" id="585057.ECIAI39_3721"/>
<dbReference type="GeneID" id="89518067"/>
<dbReference type="KEGG" id="ect:ECIAI39_3721"/>
<dbReference type="PATRIC" id="fig|585057.6.peg.3857"/>
<dbReference type="HOGENOM" id="CLU_082184_2_2_6"/>
<dbReference type="Proteomes" id="UP000000749">
    <property type="component" value="Chromosome"/>
</dbReference>
<dbReference type="GO" id="GO:0022625">
    <property type="term" value="C:cytosolic large ribosomal subunit"/>
    <property type="evidence" value="ECO:0007669"/>
    <property type="project" value="TreeGrafter"/>
</dbReference>
<dbReference type="GO" id="GO:0003729">
    <property type="term" value="F:mRNA binding"/>
    <property type="evidence" value="ECO:0007669"/>
    <property type="project" value="TreeGrafter"/>
</dbReference>
<dbReference type="GO" id="GO:0003735">
    <property type="term" value="F:structural constituent of ribosome"/>
    <property type="evidence" value="ECO:0007669"/>
    <property type="project" value="InterPro"/>
</dbReference>
<dbReference type="GO" id="GO:0017148">
    <property type="term" value="P:negative regulation of translation"/>
    <property type="evidence" value="ECO:0007669"/>
    <property type="project" value="TreeGrafter"/>
</dbReference>
<dbReference type="GO" id="GO:0006412">
    <property type="term" value="P:translation"/>
    <property type="evidence" value="ECO:0007669"/>
    <property type="project" value="UniProtKB-UniRule"/>
</dbReference>
<dbReference type="CDD" id="cd00392">
    <property type="entry name" value="Ribosomal_L13"/>
    <property type="match status" value="1"/>
</dbReference>
<dbReference type="FunFam" id="3.90.1180.10:FF:000001">
    <property type="entry name" value="50S ribosomal protein L13"/>
    <property type="match status" value="1"/>
</dbReference>
<dbReference type="Gene3D" id="3.90.1180.10">
    <property type="entry name" value="Ribosomal protein L13"/>
    <property type="match status" value="1"/>
</dbReference>
<dbReference type="HAMAP" id="MF_01366">
    <property type="entry name" value="Ribosomal_uL13"/>
    <property type="match status" value="1"/>
</dbReference>
<dbReference type="InterPro" id="IPR005822">
    <property type="entry name" value="Ribosomal_uL13"/>
</dbReference>
<dbReference type="InterPro" id="IPR005823">
    <property type="entry name" value="Ribosomal_uL13_bac-type"/>
</dbReference>
<dbReference type="InterPro" id="IPR023563">
    <property type="entry name" value="Ribosomal_uL13_CS"/>
</dbReference>
<dbReference type="InterPro" id="IPR036899">
    <property type="entry name" value="Ribosomal_uL13_sf"/>
</dbReference>
<dbReference type="NCBIfam" id="TIGR01066">
    <property type="entry name" value="rplM_bact"/>
    <property type="match status" value="1"/>
</dbReference>
<dbReference type="PANTHER" id="PTHR11545:SF2">
    <property type="entry name" value="LARGE RIBOSOMAL SUBUNIT PROTEIN UL13M"/>
    <property type="match status" value="1"/>
</dbReference>
<dbReference type="PANTHER" id="PTHR11545">
    <property type="entry name" value="RIBOSOMAL PROTEIN L13"/>
    <property type="match status" value="1"/>
</dbReference>
<dbReference type="Pfam" id="PF00572">
    <property type="entry name" value="Ribosomal_L13"/>
    <property type="match status" value="1"/>
</dbReference>
<dbReference type="PIRSF" id="PIRSF002181">
    <property type="entry name" value="Ribosomal_L13"/>
    <property type="match status" value="1"/>
</dbReference>
<dbReference type="SUPFAM" id="SSF52161">
    <property type="entry name" value="Ribosomal protein L13"/>
    <property type="match status" value="1"/>
</dbReference>
<dbReference type="PROSITE" id="PS00783">
    <property type="entry name" value="RIBOSOMAL_L13"/>
    <property type="match status" value="1"/>
</dbReference>
<organism>
    <name type="scientific">Escherichia coli O7:K1 (strain IAI39 / ExPEC)</name>
    <dbReference type="NCBI Taxonomy" id="585057"/>
    <lineage>
        <taxon>Bacteria</taxon>
        <taxon>Pseudomonadati</taxon>
        <taxon>Pseudomonadota</taxon>
        <taxon>Gammaproteobacteria</taxon>
        <taxon>Enterobacterales</taxon>
        <taxon>Enterobacteriaceae</taxon>
        <taxon>Escherichia</taxon>
    </lineage>
</organism>
<proteinExistence type="inferred from homology"/>